<sequence length="248" mass="28523">MAGLNSLEAVKRKIQALQQQADEAEDRAQGLQRELDGERERREKAEGDVAALNRRIQLVEEELDRAQERLATALQKLEEAEKAADESERGMKVIENRAMKDEEKMEIQEMQLKEAKHIAEEADRKYEEVARKLVILEGELERAEERAEVSELKCGDLEEELKNVTNNLKSLEAASEKYSEKEDKYEEEIKLLSDKLKEAETRAEFAERTVAKLEKTIDDLEEKLAQAKEENVGLHQTLDQTLDELNCI</sequence>
<dbReference type="PIR" id="A02984">
    <property type="entry name" value="TMHOBP"/>
</dbReference>
<dbReference type="SMR" id="P02561"/>
<dbReference type="STRING" id="9796.ENSECAP00000047008"/>
<dbReference type="PaxDb" id="9796-ENSECAP00000047008"/>
<dbReference type="PeptideAtlas" id="P02561"/>
<dbReference type="InParanoid" id="P02561"/>
<dbReference type="Proteomes" id="UP000002281">
    <property type="component" value="Unplaced"/>
</dbReference>
<dbReference type="GO" id="GO:0015629">
    <property type="term" value="C:actin cytoskeleton"/>
    <property type="evidence" value="ECO:0000250"/>
    <property type="project" value="UniProtKB"/>
</dbReference>
<dbReference type="GO" id="GO:0005884">
    <property type="term" value="C:actin filament"/>
    <property type="evidence" value="ECO:0000318"/>
    <property type="project" value="GO_Central"/>
</dbReference>
<dbReference type="GO" id="GO:0005737">
    <property type="term" value="C:cytoplasm"/>
    <property type="evidence" value="ECO:0007669"/>
    <property type="project" value="UniProtKB-KW"/>
</dbReference>
<dbReference type="GO" id="GO:0051015">
    <property type="term" value="F:actin filament binding"/>
    <property type="evidence" value="ECO:0000250"/>
    <property type="project" value="UniProtKB"/>
</dbReference>
<dbReference type="GO" id="GO:0042802">
    <property type="term" value="F:identical protein binding"/>
    <property type="evidence" value="ECO:0000250"/>
    <property type="project" value="UniProtKB"/>
</dbReference>
<dbReference type="GO" id="GO:0046872">
    <property type="term" value="F:metal ion binding"/>
    <property type="evidence" value="ECO:0007669"/>
    <property type="project" value="UniProtKB-KW"/>
</dbReference>
<dbReference type="GO" id="GO:0046982">
    <property type="term" value="F:protein heterodimerization activity"/>
    <property type="evidence" value="ECO:0000250"/>
    <property type="project" value="UniProtKB"/>
</dbReference>
<dbReference type="GO" id="GO:0042803">
    <property type="term" value="F:protein homodimerization activity"/>
    <property type="evidence" value="ECO:0000250"/>
    <property type="project" value="UniProtKB"/>
</dbReference>
<dbReference type="GO" id="GO:0007015">
    <property type="term" value="P:actin filament organization"/>
    <property type="evidence" value="ECO:0000318"/>
    <property type="project" value="GO_Central"/>
</dbReference>
<dbReference type="GO" id="GO:0006936">
    <property type="term" value="P:muscle contraction"/>
    <property type="evidence" value="ECO:0000318"/>
    <property type="project" value="GO_Central"/>
</dbReference>
<dbReference type="FunFam" id="1.20.5.170:FF:000001">
    <property type="entry name" value="Tropomyosin alpha-1 chain isoform 1"/>
    <property type="match status" value="1"/>
</dbReference>
<dbReference type="FunFam" id="1.20.5.340:FF:000001">
    <property type="entry name" value="Tropomyosin alpha-1 chain isoform 2"/>
    <property type="match status" value="1"/>
</dbReference>
<dbReference type="FunFam" id="1.20.5.370:FF:000004">
    <property type="entry name" value="tropomyosin alpha-1 chain isoform X1"/>
    <property type="match status" value="1"/>
</dbReference>
<dbReference type="Gene3D" id="1.20.5.170">
    <property type="match status" value="1"/>
</dbReference>
<dbReference type="Gene3D" id="1.20.5.370">
    <property type="match status" value="1"/>
</dbReference>
<dbReference type="InterPro" id="IPR000533">
    <property type="entry name" value="Tropomyosin"/>
</dbReference>
<dbReference type="InterPro" id="IPR014751">
    <property type="entry name" value="XRCC4-like_C"/>
</dbReference>
<dbReference type="PANTHER" id="PTHR19269">
    <property type="entry name" value="TROPOMYOSIN"/>
    <property type="match status" value="1"/>
</dbReference>
<dbReference type="Pfam" id="PF00261">
    <property type="entry name" value="Tropomyosin"/>
    <property type="match status" value="1"/>
</dbReference>
<dbReference type="PRINTS" id="PR00194">
    <property type="entry name" value="TROPOMYOSIN"/>
</dbReference>
<dbReference type="SUPFAM" id="SSF57997">
    <property type="entry name" value="Tropomyosin"/>
    <property type="match status" value="1"/>
</dbReference>
<dbReference type="PROSITE" id="PS00326">
    <property type="entry name" value="TROPOMYOSIN"/>
    <property type="match status" value="1"/>
</dbReference>
<accession>P02561</accession>
<gene>
    <name type="primary">TPM4</name>
</gene>
<reference key="1">
    <citation type="journal article" date="1983" name="FEBS Lett.">
        <title>Amino acid sequence of equine platelet tropomyosin. Correlation with interaction properties.</title>
        <authorList>
            <person name="Lewis W.G."/>
            <person name="Cote G.P."/>
            <person name="Mak A.S."/>
            <person name="Smillie L.B."/>
        </authorList>
    </citation>
    <scope>PROTEIN SEQUENCE OF 2-248</scope>
</reference>
<organism>
    <name type="scientific">Equus caballus</name>
    <name type="common">Horse</name>
    <dbReference type="NCBI Taxonomy" id="9796"/>
    <lineage>
        <taxon>Eukaryota</taxon>
        <taxon>Metazoa</taxon>
        <taxon>Chordata</taxon>
        <taxon>Craniata</taxon>
        <taxon>Vertebrata</taxon>
        <taxon>Euteleostomi</taxon>
        <taxon>Mammalia</taxon>
        <taxon>Eutheria</taxon>
        <taxon>Laurasiatheria</taxon>
        <taxon>Perissodactyla</taxon>
        <taxon>Equidae</taxon>
        <taxon>Equus</taxon>
    </lineage>
</organism>
<feature type="initiator methionine" description="Removed" evidence="3 5">
    <location>
        <position position="1"/>
    </location>
</feature>
<feature type="chain" id="PRO_0000205634" description="Tropomyosin alpha-4 chain">
    <location>
        <begin position="2"/>
        <end position="248"/>
    </location>
</feature>
<feature type="region of interest" description="Disordered" evidence="4">
    <location>
        <begin position="16"/>
        <end position="47"/>
    </location>
</feature>
<feature type="coiled-coil region" evidence="1">
    <location>
        <begin position="2"/>
        <end position="248"/>
    </location>
</feature>
<feature type="compositionally biased region" description="Basic and acidic residues" evidence="4">
    <location>
        <begin position="33"/>
        <end position="47"/>
    </location>
</feature>
<feature type="modified residue" description="N-acetylalanine" evidence="3">
    <location>
        <position position="2"/>
    </location>
</feature>
<feature type="modified residue" description="Phosphoserine" evidence="2">
    <location>
        <position position="6"/>
    </location>
</feature>
<feature type="modified residue" description="N6-acetyllysine" evidence="3">
    <location>
        <position position="177"/>
    </location>
</feature>
<feature type="modified residue" description="N6-acetyllysine" evidence="3">
    <location>
        <position position="215"/>
    </location>
</feature>
<feature type="modified residue" description="Phosphothreonine" evidence="3">
    <location>
        <position position="216"/>
    </location>
</feature>
<protein>
    <recommendedName>
        <fullName>Tropomyosin alpha-4 chain</fullName>
    </recommendedName>
    <alternativeName>
        <fullName>Platelet beta tropomyosin</fullName>
    </alternativeName>
    <alternativeName>
        <fullName>Tropomyosin-4</fullName>
    </alternativeName>
</protein>
<keyword id="KW-0007">Acetylation</keyword>
<keyword id="KW-0009">Actin-binding</keyword>
<keyword id="KW-0106">Calcium</keyword>
<keyword id="KW-0175">Coiled coil</keyword>
<keyword id="KW-0963">Cytoplasm</keyword>
<keyword id="KW-0206">Cytoskeleton</keyword>
<keyword id="KW-0903">Direct protein sequencing</keyword>
<keyword id="KW-0479">Metal-binding</keyword>
<keyword id="KW-0514">Muscle protein</keyword>
<keyword id="KW-0597">Phosphoprotein</keyword>
<keyword id="KW-1185">Reference proteome</keyword>
<proteinExistence type="evidence at protein level"/>
<name>TPM4_HORSE</name>
<comment type="function">
    <text evidence="2 3">Binds to actin filaments in muscle and non-muscle cells. Plays a central role, in association with the troponin complex, in the calcium dependent regulation of vertebrate striated muscle contraction. Smooth muscle contraction is regulated by interaction with caldesmon. In non-muscle cells is implicated in stabilizing cytoskeleton actin filaments. Binds calcium.</text>
</comment>
<comment type="subunit">
    <text evidence="2">Homodimer. Heterodimer of an alpha (TPM1, TPM3 or TPM4) and a beta (TPM2) chain.</text>
</comment>
<comment type="subcellular location">
    <subcellularLocation>
        <location evidence="2">Cytoplasm</location>
        <location evidence="2">Cytoskeleton</location>
    </subcellularLocation>
    <text evidence="2">Associates with F-actin stress fibers.</text>
</comment>
<comment type="domain">
    <text>The molecule is in a coiled coil structure that is formed by 2 polypeptide chains. The sequence exhibits a prominent seven-residues periodicity.</text>
</comment>
<comment type="miscellaneous">
    <text>This protein can span only six actin monomers.</text>
</comment>
<comment type="similarity">
    <text evidence="6">Belongs to the tropomyosin family.</text>
</comment>
<evidence type="ECO:0000250" key="1"/>
<evidence type="ECO:0000250" key="2">
    <source>
        <dbReference type="UniProtKB" id="P09495"/>
    </source>
</evidence>
<evidence type="ECO:0000250" key="3">
    <source>
        <dbReference type="UniProtKB" id="P67936"/>
    </source>
</evidence>
<evidence type="ECO:0000256" key="4">
    <source>
        <dbReference type="SAM" id="MobiDB-lite"/>
    </source>
</evidence>
<evidence type="ECO:0000269" key="5">
    <source>
    </source>
</evidence>
<evidence type="ECO:0000305" key="6"/>